<name>HOG1_BLAAD</name>
<comment type="function">
    <text evidence="4 8">Proline-directed serine/threonine-protein kinase involved in a signal transduction pathway that is activated by changes in the osmolarity of the extracellular environment. Controls osmotic regulation of transcription of target genes (By similarity).</text>
</comment>
<comment type="catalytic activity">
    <reaction evidence="2">
        <text>L-seryl-[protein] + ATP = O-phospho-L-seryl-[protein] + ADP + H(+)</text>
        <dbReference type="Rhea" id="RHEA:17989"/>
        <dbReference type="Rhea" id="RHEA-COMP:9863"/>
        <dbReference type="Rhea" id="RHEA-COMP:11604"/>
        <dbReference type="ChEBI" id="CHEBI:15378"/>
        <dbReference type="ChEBI" id="CHEBI:29999"/>
        <dbReference type="ChEBI" id="CHEBI:30616"/>
        <dbReference type="ChEBI" id="CHEBI:83421"/>
        <dbReference type="ChEBI" id="CHEBI:456216"/>
        <dbReference type="EC" id="2.7.11.24"/>
    </reaction>
    <physiologicalReaction direction="left-to-right" evidence="2">
        <dbReference type="Rhea" id="RHEA:17990"/>
    </physiologicalReaction>
</comment>
<comment type="catalytic activity">
    <reaction evidence="2">
        <text>L-threonyl-[protein] + ATP = O-phospho-L-threonyl-[protein] + ADP + H(+)</text>
        <dbReference type="Rhea" id="RHEA:46608"/>
        <dbReference type="Rhea" id="RHEA-COMP:11060"/>
        <dbReference type="Rhea" id="RHEA-COMP:11605"/>
        <dbReference type="ChEBI" id="CHEBI:15378"/>
        <dbReference type="ChEBI" id="CHEBI:30013"/>
        <dbReference type="ChEBI" id="CHEBI:30616"/>
        <dbReference type="ChEBI" id="CHEBI:61977"/>
        <dbReference type="ChEBI" id="CHEBI:456216"/>
        <dbReference type="EC" id="2.7.11.24"/>
    </reaction>
    <physiologicalReaction direction="left-to-right" evidence="2">
        <dbReference type="Rhea" id="RHEA:46609"/>
    </physiologicalReaction>
</comment>
<comment type="cofactor">
    <cofactor evidence="3">
        <name>Mg(2+)</name>
        <dbReference type="ChEBI" id="CHEBI:18420"/>
    </cofactor>
</comment>
<comment type="activity regulation">
    <text evidence="1">Activated by tyrosine and threonine phosphorylation.</text>
</comment>
<comment type="subcellular location">
    <subcellularLocation>
        <location evidence="1">Cytoplasm</location>
    </subcellularLocation>
    <subcellularLocation>
        <location evidence="1">Nucleus</location>
    </subcellularLocation>
</comment>
<comment type="induction">
    <text evidence="8">By salt stress.</text>
</comment>
<comment type="domain">
    <text>The TXY motif contains the threonine and tyrosine residues whose phosphorylation activates the MAP kinases.</text>
</comment>
<comment type="PTM">
    <text evidence="1 8">Dually phosphorylated on Thr-171 and Tyr-173, which activates the enzyme (By similarity). Phosphorylation is induced by osmotic stress.</text>
</comment>
<comment type="similarity">
    <text evidence="5">Belongs to the protein kinase superfamily. Ser/Thr protein kinase family. MAP kinase subfamily. HOG1 sub-subfamily.</text>
</comment>
<accession>Q702W0</accession>
<gene>
    <name type="primary">hog1</name>
</gene>
<protein>
    <recommendedName>
        <fullName>Mitogen-activated protein kinase hog1</fullName>
        <shortName>AHOG1</shortName>
        <shortName>MAP kinase hog1</shortName>
        <ecNumber evidence="2">2.7.11.24</ecNumber>
    </recommendedName>
</protein>
<keyword id="KW-0010">Activator</keyword>
<keyword id="KW-0067">ATP-binding</keyword>
<keyword id="KW-0963">Cytoplasm</keyword>
<keyword id="KW-0418">Kinase</keyword>
<keyword id="KW-0547">Nucleotide-binding</keyword>
<keyword id="KW-0539">Nucleus</keyword>
<keyword id="KW-0597">Phosphoprotein</keyword>
<keyword id="KW-0723">Serine/threonine-protein kinase</keyword>
<keyword id="KW-0804">Transcription</keyword>
<keyword id="KW-0805">Transcription regulation</keyword>
<keyword id="KW-0808">Transferase</keyword>
<sequence>MADFIRTQIFGTCFEITSRYVDLNPVGMGAFGLVCSARDQLTNQNVAIKKIMKPFSTPVLAKRTYRELKLLKHLRHENLITLSDIFISPLEDIYFVTELLGTDLHRLLTSRPLEHQFIQYFLYQILRGLKYVHSAGVVHRDLKPSNILINENCDLKICDFGLARIQDPQMTGYVSTRYYRAPEIMLTWQKYDVEVDIWSAGCIFAEMLRGKPLFPGKDHVHQFSIITELLGNPPDDVIETIGSENTLNFVKSLPKRERIPLSQKFPNADPDAVDLLEKMLVFDPRKRINAADALAHPYLAPYHEPSDEPVASEKFDWSFNDADLPVDTWKVMMYSEILDFHNVDSSAVEQQQQQPQPPQPQLQQQQQPPQQPQQPQQPQXAQQPVQPVQGDYVPQVAPRS</sequence>
<dbReference type="EC" id="2.7.11.24" evidence="2"/>
<dbReference type="EMBL" id="AJ626723">
    <property type="protein sequence ID" value="CAF25030.1"/>
    <property type="molecule type" value="Genomic_DNA"/>
</dbReference>
<dbReference type="GO" id="GO:0005737">
    <property type="term" value="C:cytoplasm"/>
    <property type="evidence" value="ECO:0007669"/>
    <property type="project" value="UniProtKB-SubCell"/>
</dbReference>
<dbReference type="GO" id="GO:0005634">
    <property type="term" value="C:nucleus"/>
    <property type="evidence" value="ECO:0007669"/>
    <property type="project" value="UniProtKB-SubCell"/>
</dbReference>
<dbReference type="GO" id="GO:0005524">
    <property type="term" value="F:ATP binding"/>
    <property type="evidence" value="ECO:0007669"/>
    <property type="project" value="UniProtKB-KW"/>
</dbReference>
<dbReference type="GO" id="GO:0004707">
    <property type="term" value="F:MAP kinase activity"/>
    <property type="evidence" value="ECO:0007669"/>
    <property type="project" value="UniProtKB-EC"/>
</dbReference>
<dbReference type="GO" id="GO:0106310">
    <property type="term" value="F:protein serine kinase activity"/>
    <property type="evidence" value="ECO:0007669"/>
    <property type="project" value="RHEA"/>
</dbReference>
<dbReference type="GO" id="GO:0051403">
    <property type="term" value="P:stress-activated MAPK cascade"/>
    <property type="evidence" value="ECO:0007669"/>
    <property type="project" value="InterPro"/>
</dbReference>
<dbReference type="CDD" id="cd07856">
    <property type="entry name" value="STKc_Sty1_Hog1"/>
    <property type="match status" value="1"/>
</dbReference>
<dbReference type="FunFam" id="1.10.510.10:FF:000049">
    <property type="entry name" value="Mitogen-activated protein kinase"/>
    <property type="match status" value="1"/>
</dbReference>
<dbReference type="FunFam" id="3.30.200.20:FF:000050">
    <property type="entry name" value="Mitogen-activated protein kinase"/>
    <property type="match status" value="1"/>
</dbReference>
<dbReference type="Gene3D" id="3.30.200.20">
    <property type="entry name" value="Phosphorylase Kinase, domain 1"/>
    <property type="match status" value="1"/>
</dbReference>
<dbReference type="Gene3D" id="1.10.510.10">
    <property type="entry name" value="Transferase(Phosphotransferase) domain 1"/>
    <property type="match status" value="1"/>
</dbReference>
<dbReference type="InterPro" id="IPR011009">
    <property type="entry name" value="Kinase-like_dom_sf"/>
</dbReference>
<dbReference type="InterPro" id="IPR050117">
    <property type="entry name" value="MAP_kinase"/>
</dbReference>
<dbReference type="InterPro" id="IPR003527">
    <property type="entry name" value="MAP_kinase_CS"/>
</dbReference>
<dbReference type="InterPro" id="IPR008352">
    <property type="entry name" value="MAPK_p38-like"/>
</dbReference>
<dbReference type="InterPro" id="IPR038783">
    <property type="entry name" value="MAPK_Sty1/Hog1"/>
</dbReference>
<dbReference type="InterPro" id="IPR000719">
    <property type="entry name" value="Prot_kinase_dom"/>
</dbReference>
<dbReference type="InterPro" id="IPR017441">
    <property type="entry name" value="Protein_kinase_ATP_BS"/>
</dbReference>
<dbReference type="InterPro" id="IPR008271">
    <property type="entry name" value="Ser/Thr_kinase_AS"/>
</dbReference>
<dbReference type="PANTHER" id="PTHR24055">
    <property type="entry name" value="MITOGEN-ACTIVATED PROTEIN KINASE"/>
    <property type="match status" value="1"/>
</dbReference>
<dbReference type="Pfam" id="PF00069">
    <property type="entry name" value="Pkinase"/>
    <property type="match status" value="1"/>
</dbReference>
<dbReference type="PRINTS" id="PR01773">
    <property type="entry name" value="P38MAPKINASE"/>
</dbReference>
<dbReference type="SMART" id="SM00220">
    <property type="entry name" value="S_TKc"/>
    <property type="match status" value="1"/>
</dbReference>
<dbReference type="SUPFAM" id="SSF56112">
    <property type="entry name" value="Protein kinase-like (PK-like)"/>
    <property type="match status" value="1"/>
</dbReference>
<dbReference type="PROSITE" id="PS01351">
    <property type="entry name" value="MAPK"/>
    <property type="match status" value="1"/>
</dbReference>
<dbReference type="PROSITE" id="PS00107">
    <property type="entry name" value="PROTEIN_KINASE_ATP"/>
    <property type="match status" value="1"/>
</dbReference>
<dbReference type="PROSITE" id="PS50011">
    <property type="entry name" value="PROTEIN_KINASE_DOM"/>
    <property type="match status" value="1"/>
</dbReference>
<dbReference type="PROSITE" id="PS00108">
    <property type="entry name" value="PROTEIN_KINASE_ST"/>
    <property type="match status" value="1"/>
</dbReference>
<proteinExistence type="evidence at protein level"/>
<reference key="1">
    <citation type="journal article" date="2004" name="Curr. Genet.">
        <title>Characterization of the Arxula adeninivorans AHOG1 gene and the encoded mitogen-activated protein kinase.</title>
        <authorList>
            <person name="Boeer E."/>
            <person name="Wartmann T."/>
            <person name="Dlubatz K."/>
            <person name="Gellissen G."/>
            <person name="Kunze G."/>
        </authorList>
    </citation>
    <scope>NUCLEOTIDE SEQUENCE [GENOMIC DNA]</scope>
    <scope>FUNCTION</scope>
    <scope>INDUCTION</scope>
    <scope>PHOSPHORYLATION</scope>
    <source>
        <strain>LS3</strain>
    </source>
</reference>
<feature type="chain" id="PRO_0000289672" description="Mitogen-activated protein kinase hog1">
    <location>
        <begin position="1"/>
        <end position="400"/>
    </location>
</feature>
<feature type="domain" description="Protein kinase" evidence="5">
    <location>
        <begin position="20"/>
        <end position="299"/>
    </location>
</feature>
<feature type="region of interest" description="Disordered" evidence="7">
    <location>
        <begin position="345"/>
        <end position="400"/>
    </location>
</feature>
<feature type="short sequence motif" description="TXY">
    <location>
        <begin position="171"/>
        <end position="173"/>
    </location>
</feature>
<feature type="compositionally biased region" description="Low complexity" evidence="7">
    <location>
        <begin position="361"/>
        <end position="389"/>
    </location>
</feature>
<feature type="active site" description="Proton acceptor" evidence="5 6">
    <location>
        <position position="141"/>
    </location>
</feature>
<feature type="binding site" evidence="5">
    <location>
        <begin position="26"/>
        <end position="34"/>
    </location>
    <ligand>
        <name>ATP</name>
        <dbReference type="ChEBI" id="CHEBI:30616"/>
    </ligand>
</feature>
<feature type="binding site" evidence="5">
    <location>
        <position position="49"/>
    </location>
    <ligand>
        <name>ATP</name>
        <dbReference type="ChEBI" id="CHEBI:30616"/>
    </ligand>
</feature>
<feature type="modified residue" description="Phosphothreonine" evidence="1">
    <location>
        <position position="171"/>
    </location>
</feature>
<feature type="modified residue" description="Phosphotyrosine" evidence="1">
    <location>
        <position position="173"/>
    </location>
</feature>
<evidence type="ECO:0000250" key="1"/>
<evidence type="ECO:0000250" key="2">
    <source>
        <dbReference type="UniProtKB" id="P32485"/>
    </source>
</evidence>
<evidence type="ECO:0000250" key="3">
    <source>
        <dbReference type="UniProtKB" id="Q16539"/>
    </source>
</evidence>
<evidence type="ECO:0000250" key="4">
    <source>
        <dbReference type="UniProtKB" id="Q4WSF6"/>
    </source>
</evidence>
<evidence type="ECO:0000255" key="5">
    <source>
        <dbReference type="PROSITE-ProRule" id="PRU00159"/>
    </source>
</evidence>
<evidence type="ECO:0000255" key="6">
    <source>
        <dbReference type="PROSITE-ProRule" id="PRU10027"/>
    </source>
</evidence>
<evidence type="ECO:0000256" key="7">
    <source>
        <dbReference type="SAM" id="MobiDB-lite"/>
    </source>
</evidence>
<evidence type="ECO:0000269" key="8">
    <source>
    </source>
</evidence>
<organism>
    <name type="scientific">Blastobotrys adeninivorans</name>
    <name type="common">Yeast</name>
    <name type="synonym">Arxula adeninivorans</name>
    <dbReference type="NCBI Taxonomy" id="409370"/>
    <lineage>
        <taxon>Eukaryota</taxon>
        <taxon>Fungi</taxon>
        <taxon>Dikarya</taxon>
        <taxon>Ascomycota</taxon>
        <taxon>Saccharomycotina</taxon>
        <taxon>Dipodascomycetes</taxon>
        <taxon>Dipodascales</taxon>
        <taxon>Trichomonascaceae</taxon>
        <taxon>Blastobotrys</taxon>
    </lineage>
</organism>